<feature type="chain" id="PRO_1000200338" description="tRNA uridine(34) hydroxylase">
    <location>
        <begin position="1"/>
        <end position="319"/>
    </location>
</feature>
<feature type="domain" description="Rhodanese" evidence="1">
    <location>
        <begin position="127"/>
        <end position="221"/>
    </location>
</feature>
<feature type="active site" description="Cysteine persulfide intermediate" evidence="1">
    <location>
        <position position="181"/>
    </location>
</feature>
<gene>
    <name evidence="1" type="primary">trhO</name>
    <name type="ordered locus">BCAH820_1916</name>
</gene>
<sequence length="319" mass="36761">MATTKPYRVLLYYMYTTIENPEEFAAEHLEFCNSLELKGRILVAKEGINGTCSGTVEQTEKYMEAMNNDPRFDGIVFKIDEADGHAFKKMHVRPRPELVTLRLEDDINPHEITGKYLEPKDFYEAMKQEDTVIIDARNDYEFDLGHFKGAIKPDIESFRELPDWIRENKEVLEGKKILTYCTGGIRCEKFSGWLVREGYEDVSQLHGGIVTYGKDPEVQGELWDGQCYVFDERIAVPVNQKEHVIVGKDHFTGEPCERYVNCANPECNKKILCSEENEAKYLRACSHECRVSPRNRYVIQHELTEEQVAAALEKIEAGK</sequence>
<proteinExistence type="inferred from homology"/>
<protein>
    <recommendedName>
        <fullName evidence="1">tRNA uridine(34) hydroxylase</fullName>
        <ecNumber evidence="1">1.14.-.-</ecNumber>
    </recommendedName>
    <alternativeName>
        <fullName evidence="1">tRNA hydroxylation protein O</fullName>
    </alternativeName>
</protein>
<dbReference type="EC" id="1.14.-.-" evidence="1"/>
<dbReference type="EMBL" id="CP001283">
    <property type="protein sequence ID" value="ACK89988.1"/>
    <property type="molecule type" value="Genomic_DNA"/>
</dbReference>
<dbReference type="RefSeq" id="WP_000246229.1">
    <property type="nucleotide sequence ID" value="NC_011773.1"/>
</dbReference>
<dbReference type="SMR" id="B7JJJ3"/>
<dbReference type="KEGG" id="bcu:BCAH820_1916"/>
<dbReference type="HOGENOM" id="CLU_038878_1_0_9"/>
<dbReference type="Proteomes" id="UP000001363">
    <property type="component" value="Chromosome"/>
</dbReference>
<dbReference type="GO" id="GO:0016705">
    <property type="term" value="F:oxidoreductase activity, acting on paired donors, with incorporation or reduction of molecular oxygen"/>
    <property type="evidence" value="ECO:0007669"/>
    <property type="project" value="UniProtKB-UniRule"/>
</dbReference>
<dbReference type="GO" id="GO:0006400">
    <property type="term" value="P:tRNA modification"/>
    <property type="evidence" value="ECO:0007669"/>
    <property type="project" value="UniProtKB-UniRule"/>
</dbReference>
<dbReference type="CDD" id="cd01518">
    <property type="entry name" value="RHOD_YceA"/>
    <property type="match status" value="1"/>
</dbReference>
<dbReference type="Gene3D" id="3.30.70.100">
    <property type="match status" value="1"/>
</dbReference>
<dbReference type="Gene3D" id="3.40.250.10">
    <property type="entry name" value="Rhodanese-like domain"/>
    <property type="match status" value="1"/>
</dbReference>
<dbReference type="HAMAP" id="MF_00469">
    <property type="entry name" value="TrhO"/>
    <property type="match status" value="1"/>
</dbReference>
<dbReference type="InterPro" id="IPR001763">
    <property type="entry name" value="Rhodanese-like_dom"/>
</dbReference>
<dbReference type="InterPro" id="IPR036873">
    <property type="entry name" value="Rhodanese-like_dom_sf"/>
</dbReference>
<dbReference type="InterPro" id="IPR022111">
    <property type="entry name" value="Rhodanese_C"/>
</dbReference>
<dbReference type="InterPro" id="IPR020936">
    <property type="entry name" value="TrhO"/>
</dbReference>
<dbReference type="InterPro" id="IPR040503">
    <property type="entry name" value="TRHO_N"/>
</dbReference>
<dbReference type="NCBIfam" id="NF001135">
    <property type="entry name" value="PRK00142.1-3"/>
    <property type="match status" value="1"/>
</dbReference>
<dbReference type="PANTHER" id="PTHR43268:SF3">
    <property type="entry name" value="RHODANESE-LIKE DOMAIN-CONTAINING PROTEIN 7-RELATED"/>
    <property type="match status" value="1"/>
</dbReference>
<dbReference type="PANTHER" id="PTHR43268">
    <property type="entry name" value="THIOSULFATE SULFURTRANSFERASE/RHODANESE-LIKE DOMAIN-CONTAINING PROTEIN 2"/>
    <property type="match status" value="1"/>
</dbReference>
<dbReference type="Pfam" id="PF00581">
    <property type="entry name" value="Rhodanese"/>
    <property type="match status" value="1"/>
</dbReference>
<dbReference type="Pfam" id="PF12368">
    <property type="entry name" value="Rhodanese_C"/>
    <property type="match status" value="1"/>
</dbReference>
<dbReference type="Pfam" id="PF17773">
    <property type="entry name" value="UPF0176_N"/>
    <property type="match status" value="1"/>
</dbReference>
<dbReference type="SMART" id="SM00450">
    <property type="entry name" value="RHOD"/>
    <property type="match status" value="1"/>
</dbReference>
<dbReference type="SUPFAM" id="SSF52821">
    <property type="entry name" value="Rhodanese/Cell cycle control phosphatase"/>
    <property type="match status" value="1"/>
</dbReference>
<dbReference type="PROSITE" id="PS50206">
    <property type="entry name" value="RHODANESE_3"/>
    <property type="match status" value="1"/>
</dbReference>
<comment type="function">
    <text evidence="1">Catalyzes oxygen-dependent 5-hydroxyuridine (ho5U) modification at position 34 in tRNAs.</text>
</comment>
<comment type="catalytic activity">
    <reaction evidence="1">
        <text>uridine(34) in tRNA + AH2 + O2 = 5-hydroxyuridine(34) in tRNA + A + H2O</text>
        <dbReference type="Rhea" id="RHEA:64224"/>
        <dbReference type="Rhea" id="RHEA-COMP:11727"/>
        <dbReference type="Rhea" id="RHEA-COMP:13381"/>
        <dbReference type="ChEBI" id="CHEBI:13193"/>
        <dbReference type="ChEBI" id="CHEBI:15377"/>
        <dbReference type="ChEBI" id="CHEBI:15379"/>
        <dbReference type="ChEBI" id="CHEBI:17499"/>
        <dbReference type="ChEBI" id="CHEBI:65315"/>
        <dbReference type="ChEBI" id="CHEBI:136877"/>
    </reaction>
</comment>
<comment type="similarity">
    <text evidence="1">Belongs to the TrhO family.</text>
</comment>
<organism>
    <name type="scientific">Bacillus cereus (strain AH820)</name>
    <dbReference type="NCBI Taxonomy" id="405535"/>
    <lineage>
        <taxon>Bacteria</taxon>
        <taxon>Bacillati</taxon>
        <taxon>Bacillota</taxon>
        <taxon>Bacilli</taxon>
        <taxon>Bacillales</taxon>
        <taxon>Bacillaceae</taxon>
        <taxon>Bacillus</taxon>
        <taxon>Bacillus cereus group</taxon>
    </lineage>
</organism>
<accession>B7JJJ3</accession>
<reference key="1">
    <citation type="submission" date="2008-10" db="EMBL/GenBank/DDBJ databases">
        <title>Genome sequence of Bacillus cereus AH820.</title>
        <authorList>
            <person name="Dodson R.J."/>
            <person name="Durkin A.S."/>
            <person name="Rosovitz M.J."/>
            <person name="Rasko D.A."/>
            <person name="Hoffmaster A."/>
            <person name="Ravel J."/>
            <person name="Sutton G."/>
        </authorList>
    </citation>
    <scope>NUCLEOTIDE SEQUENCE [LARGE SCALE GENOMIC DNA]</scope>
    <source>
        <strain>AH820</strain>
    </source>
</reference>
<name>TRHO_BACC0</name>
<evidence type="ECO:0000255" key="1">
    <source>
        <dbReference type="HAMAP-Rule" id="MF_00469"/>
    </source>
</evidence>
<keyword id="KW-0560">Oxidoreductase</keyword>
<keyword id="KW-0819">tRNA processing</keyword>